<comment type="function">
    <text>Toxin which activates the particulate form of guanylate cyclase and increases cyclic GMP levels within the host intestinal epithelial cells. Could play an important role in pathogenesis.</text>
</comment>
<comment type="subcellular location">
    <subcellularLocation>
        <location>Secreted</location>
    </subcellularLocation>
</comment>
<comment type="similarity">
    <text evidence="3">Belongs to the heat-stable enterotoxin family.</text>
</comment>
<reference key="1">
    <citation type="journal article" date="1997" name="Microb. Pathog.">
        <title>The novel heat-stable enterotoxin subtype gene (ystB) of Yersinia enterocolitica: nucleotide sequence and distribution of the yst genes.</title>
        <authorList>
            <person name="Ramamurthy T."/>
            <person name="Yoshino K."/>
            <person name="Huang X."/>
            <person name="Nair G.B."/>
            <person name="Carniel E."/>
            <person name="Maruyama T."/>
            <person name="Fukushima H."/>
            <person name="Takeda T."/>
        </authorList>
    </citation>
    <scope>NUCLEOTIDE SEQUENCE [GENOMIC DNA]</scope>
    <scope>PARTIAL PROTEIN SEQUENCE</scope>
    <source>
        <strain>84-50 / Serotype O:5</strain>
    </source>
</reference>
<evidence type="ECO:0000250" key="1"/>
<evidence type="ECO:0000255" key="2"/>
<evidence type="ECO:0000305" key="3"/>
<dbReference type="EMBL" id="D88145">
    <property type="protein sequence ID" value="BAA13544.1"/>
    <property type="molecule type" value="Genomic_DNA"/>
</dbReference>
<dbReference type="RefSeq" id="WP_019079716.1">
    <property type="nucleotide sequence ID" value="NZ_NJFX02000001.1"/>
</dbReference>
<dbReference type="GO" id="GO:0005615">
    <property type="term" value="C:extracellular space"/>
    <property type="evidence" value="ECO:0007669"/>
    <property type="project" value="InterPro"/>
</dbReference>
<dbReference type="GO" id="GO:0090729">
    <property type="term" value="F:toxin activity"/>
    <property type="evidence" value="ECO:0007669"/>
    <property type="project" value="UniProtKB-KW"/>
</dbReference>
<dbReference type="InterPro" id="IPR019806">
    <property type="entry name" value="Heat-stable_enterotox_CS"/>
</dbReference>
<dbReference type="InterPro" id="IPR001489">
    <property type="entry name" value="Heat-stable_enterotox_STa"/>
</dbReference>
<dbReference type="Pfam" id="PF02048">
    <property type="entry name" value="Enterotoxin_ST"/>
    <property type="match status" value="1"/>
</dbReference>
<dbReference type="PROSITE" id="PS00273">
    <property type="entry name" value="ENTEROTOXIN_H_STABLE"/>
    <property type="match status" value="1"/>
</dbReference>
<proteinExistence type="evidence at protein level"/>
<name>HSTB_YEREN</name>
<protein>
    <recommendedName>
        <fullName>Heat-stable enterotoxin B</fullName>
    </recommendedName>
    <alternativeName>
        <fullName>Y-STB</fullName>
    </alternativeName>
</protein>
<feature type="signal peptide" evidence="2">
    <location>
        <begin position="1"/>
        <end position="19"/>
    </location>
</feature>
<feature type="propeptide" id="PRO_0000035139">
    <location>
        <begin position="20"/>
        <end position="52"/>
    </location>
</feature>
<feature type="peptide" id="PRO_0000035140" description="Heat-stable enterotoxin B">
    <location>
        <begin position="53"/>
        <end position="71"/>
    </location>
</feature>
<feature type="disulfide bond" evidence="1">
    <location>
        <begin position="59"/>
        <end position="64"/>
    </location>
</feature>
<feature type="disulfide bond" evidence="1">
    <location>
        <begin position="60"/>
        <end position="68"/>
    </location>
</feature>
<feature type="disulfide bond" evidence="1">
    <location>
        <begin position="63"/>
        <end position="71"/>
    </location>
</feature>
<keyword id="KW-0903">Direct protein sequencing</keyword>
<keyword id="KW-1015">Disulfide bond</keyword>
<keyword id="KW-0260">Enterotoxin</keyword>
<keyword id="KW-0964">Secreted</keyword>
<keyword id="KW-0732">Signal</keyword>
<keyword id="KW-0800">Toxin</keyword>
<keyword id="KW-0843">Virulence</keyword>
<organism>
    <name type="scientific">Yersinia enterocolitica</name>
    <dbReference type="NCBI Taxonomy" id="630"/>
    <lineage>
        <taxon>Bacteria</taxon>
        <taxon>Pseudomonadati</taxon>
        <taxon>Pseudomonadota</taxon>
        <taxon>Gammaproteobacteria</taxon>
        <taxon>Enterobacterales</taxon>
        <taxon>Yersiniaceae</taxon>
        <taxon>Yersinia</taxon>
    </lineage>
</organism>
<accession>P74977</accession>
<sequence>MKKIILALVLMLFSFCTLGQETASMHLDDTLSAPIAAEINRKACDTQTPSPSEENDDWCCEVCCNPACAGC</sequence>
<gene>
    <name type="primary">ystB</name>
</gene>